<comment type="function">
    <text evidence="1">Catalyzes the interconversion of 2-phosphoglycerate and 3-phosphoglycerate.</text>
</comment>
<comment type="catalytic activity">
    <reaction evidence="1">
        <text>(2R)-2-phosphoglycerate = (2R)-3-phosphoglycerate</text>
        <dbReference type="Rhea" id="RHEA:15901"/>
        <dbReference type="ChEBI" id="CHEBI:58272"/>
        <dbReference type="ChEBI" id="CHEBI:58289"/>
        <dbReference type="EC" id="5.4.2.12"/>
    </reaction>
</comment>
<comment type="cofactor">
    <cofactor evidence="1">
        <name>Mn(2+)</name>
        <dbReference type="ChEBI" id="CHEBI:29035"/>
    </cofactor>
    <text evidence="1">Binds 2 manganese ions per subunit.</text>
</comment>
<comment type="pathway">
    <text evidence="1">Carbohydrate degradation; glycolysis; pyruvate from D-glyceraldehyde 3-phosphate: step 3/5.</text>
</comment>
<comment type="subunit">
    <text evidence="1">Monomer.</text>
</comment>
<comment type="similarity">
    <text evidence="1">Belongs to the BPG-independent phosphoglycerate mutase family.</text>
</comment>
<name>GPMI_MYCM1</name>
<proteinExistence type="inferred from homology"/>
<accession>Q6KHV9</accession>
<keyword id="KW-0324">Glycolysis</keyword>
<keyword id="KW-0413">Isomerase</keyword>
<keyword id="KW-0464">Manganese</keyword>
<keyword id="KW-0479">Metal-binding</keyword>
<keyword id="KW-1185">Reference proteome</keyword>
<gene>
    <name evidence="1" type="primary">gpmI</name>
    <name type="synonym">pgm</name>
    <name type="ordered locus">MMOB3310</name>
</gene>
<reference key="1">
    <citation type="journal article" date="2004" name="Genome Res.">
        <title>The complete genome and proteome of Mycoplasma mobile.</title>
        <authorList>
            <person name="Jaffe J.D."/>
            <person name="Stange-Thomann N."/>
            <person name="Smith C."/>
            <person name="DeCaprio D."/>
            <person name="Fisher S."/>
            <person name="Butler J."/>
            <person name="Calvo S."/>
            <person name="Elkins T."/>
            <person name="FitzGerald M.G."/>
            <person name="Hafez N."/>
            <person name="Kodira C.D."/>
            <person name="Major J."/>
            <person name="Wang S."/>
            <person name="Wilkinson J."/>
            <person name="Nicol R."/>
            <person name="Nusbaum C."/>
            <person name="Birren B."/>
            <person name="Berg H.C."/>
            <person name="Church G.M."/>
        </authorList>
    </citation>
    <scope>NUCLEOTIDE SEQUENCE [LARGE SCALE GENOMIC DNA]</scope>
    <source>
        <strain>ATCC 43663 / NCTC 11711 / 163 K</strain>
    </source>
</reference>
<dbReference type="EC" id="5.4.2.12" evidence="1"/>
<dbReference type="EMBL" id="AE017308">
    <property type="protein sequence ID" value="AAT27817.1"/>
    <property type="molecule type" value="Genomic_DNA"/>
</dbReference>
<dbReference type="RefSeq" id="WP_011264851.1">
    <property type="nucleotide sequence ID" value="NC_006908.1"/>
</dbReference>
<dbReference type="SMR" id="Q6KHV9"/>
<dbReference type="STRING" id="267748.MMOB3310"/>
<dbReference type="KEGG" id="mmo:MMOB3310"/>
<dbReference type="eggNOG" id="COG0696">
    <property type="taxonomic scope" value="Bacteria"/>
</dbReference>
<dbReference type="HOGENOM" id="CLU_026099_2_0_14"/>
<dbReference type="OrthoDB" id="9800863at2"/>
<dbReference type="UniPathway" id="UPA00109">
    <property type="reaction ID" value="UER00186"/>
</dbReference>
<dbReference type="Proteomes" id="UP000009072">
    <property type="component" value="Chromosome"/>
</dbReference>
<dbReference type="GO" id="GO:0005829">
    <property type="term" value="C:cytosol"/>
    <property type="evidence" value="ECO:0007669"/>
    <property type="project" value="TreeGrafter"/>
</dbReference>
<dbReference type="GO" id="GO:0030145">
    <property type="term" value="F:manganese ion binding"/>
    <property type="evidence" value="ECO:0007669"/>
    <property type="project" value="UniProtKB-UniRule"/>
</dbReference>
<dbReference type="GO" id="GO:0004619">
    <property type="term" value="F:phosphoglycerate mutase activity"/>
    <property type="evidence" value="ECO:0007669"/>
    <property type="project" value="UniProtKB-EC"/>
</dbReference>
<dbReference type="GO" id="GO:0006007">
    <property type="term" value="P:glucose catabolic process"/>
    <property type="evidence" value="ECO:0007669"/>
    <property type="project" value="InterPro"/>
</dbReference>
<dbReference type="GO" id="GO:0006096">
    <property type="term" value="P:glycolytic process"/>
    <property type="evidence" value="ECO:0007669"/>
    <property type="project" value="UniProtKB-UniRule"/>
</dbReference>
<dbReference type="CDD" id="cd16010">
    <property type="entry name" value="iPGM"/>
    <property type="match status" value="1"/>
</dbReference>
<dbReference type="FunFam" id="3.40.1450.10:FF:000002">
    <property type="entry name" value="2,3-bisphosphoglycerate-independent phosphoglycerate mutase"/>
    <property type="match status" value="1"/>
</dbReference>
<dbReference type="Gene3D" id="3.40.720.10">
    <property type="entry name" value="Alkaline Phosphatase, subunit A"/>
    <property type="match status" value="1"/>
</dbReference>
<dbReference type="Gene3D" id="3.40.1450.10">
    <property type="entry name" value="BPG-independent phosphoglycerate mutase, domain B"/>
    <property type="match status" value="1"/>
</dbReference>
<dbReference type="HAMAP" id="MF_01038">
    <property type="entry name" value="GpmI"/>
    <property type="match status" value="1"/>
</dbReference>
<dbReference type="InterPro" id="IPR017850">
    <property type="entry name" value="Alkaline_phosphatase_core_sf"/>
</dbReference>
<dbReference type="InterPro" id="IPR011258">
    <property type="entry name" value="BPG-indep_PGM_N"/>
</dbReference>
<dbReference type="InterPro" id="IPR006124">
    <property type="entry name" value="Metalloenzyme"/>
</dbReference>
<dbReference type="InterPro" id="IPR036646">
    <property type="entry name" value="PGAM_B_sf"/>
</dbReference>
<dbReference type="InterPro" id="IPR005995">
    <property type="entry name" value="Pgm_bpd_ind"/>
</dbReference>
<dbReference type="NCBIfam" id="TIGR01307">
    <property type="entry name" value="pgm_bpd_ind"/>
    <property type="match status" value="1"/>
</dbReference>
<dbReference type="PANTHER" id="PTHR31637">
    <property type="entry name" value="2,3-BISPHOSPHOGLYCERATE-INDEPENDENT PHOSPHOGLYCERATE MUTASE"/>
    <property type="match status" value="1"/>
</dbReference>
<dbReference type="PANTHER" id="PTHR31637:SF0">
    <property type="entry name" value="2,3-BISPHOSPHOGLYCERATE-INDEPENDENT PHOSPHOGLYCERATE MUTASE"/>
    <property type="match status" value="1"/>
</dbReference>
<dbReference type="Pfam" id="PF06415">
    <property type="entry name" value="iPGM_N"/>
    <property type="match status" value="1"/>
</dbReference>
<dbReference type="Pfam" id="PF01676">
    <property type="entry name" value="Metalloenzyme"/>
    <property type="match status" value="1"/>
</dbReference>
<dbReference type="PIRSF" id="PIRSF001492">
    <property type="entry name" value="IPGAM"/>
    <property type="match status" value="1"/>
</dbReference>
<dbReference type="SUPFAM" id="SSF64158">
    <property type="entry name" value="2,3-Bisphosphoglycerate-independent phosphoglycerate mutase, substrate-binding domain"/>
    <property type="match status" value="1"/>
</dbReference>
<dbReference type="SUPFAM" id="SSF53649">
    <property type="entry name" value="Alkaline phosphatase-like"/>
    <property type="match status" value="1"/>
</dbReference>
<protein>
    <recommendedName>
        <fullName evidence="1">2,3-bisphosphoglycerate-independent phosphoglycerate mutase</fullName>
        <shortName evidence="1">BPG-independent PGAM</shortName>
        <shortName evidence="1">Phosphoglyceromutase</shortName>
        <shortName evidence="1">iPGM</shortName>
        <ecNumber evidence="1">5.4.2.12</ecNumber>
    </recommendedName>
</protein>
<feature type="chain" id="PRO_0000212172" description="2,3-bisphosphoglycerate-independent phosphoglycerate mutase">
    <location>
        <begin position="1"/>
        <end position="510"/>
    </location>
</feature>
<feature type="active site" description="Phosphoserine intermediate" evidence="1">
    <location>
        <position position="61"/>
    </location>
</feature>
<feature type="binding site" evidence="1">
    <location>
        <position position="11"/>
    </location>
    <ligand>
        <name>Mn(2+)</name>
        <dbReference type="ChEBI" id="CHEBI:29035"/>
        <label>2</label>
    </ligand>
</feature>
<feature type="binding site" evidence="1">
    <location>
        <position position="61"/>
    </location>
    <ligand>
        <name>Mn(2+)</name>
        <dbReference type="ChEBI" id="CHEBI:29035"/>
        <label>2</label>
    </ligand>
</feature>
<feature type="binding site" evidence="1">
    <location>
        <position position="124"/>
    </location>
    <ligand>
        <name>substrate</name>
    </ligand>
</feature>
<feature type="binding site" evidence="1">
    <location>
        <begin position="154"/>
        <end position="155"/>
    </location>
    <ligand>
        <name>substrate</name>
    </ligand>
</feature>
<feature type="binding site" evidence="1">
    <location>
        <position position="185"/>
    </location>
    <ligand>
        <name>substrate</name>
    </ligand>
</feature>
<feature type="binding site" evidence="1">
    <location>
        <position position="191"/>
    </location>
    <ligand>
        <name>substrate</name>
    </ligand>
</feature>
<feature type="binding site" evidence="1">
    <location>
        <begin position="260"/>
        <end position="263"/>
    </location>
    <ligand>
        <name>substrate</name>
    </ligand>
</feature>
<feature type="binding site" evidence="1">
    <location>
        <position position="333"/>
    </location>
    <ligand>
        <name>substrate</name>
    </ligand>
</feature>
<feature type="binding site" evidence="1">
    <location>
        <position position="398"/>
    </location>
    <ligand>
        <name>Mn(2+)</name>
        <dbReference type="ChEBI" id="CHEBI:29035"/>
        <label>1</label>
    </ligand>
</feature>
<feature type="binding site" evidence="1">
    <location>
        <position position="402"/>
    </location>
    <ligand>
        <name>Mn(2+)</name>
        <dbReference type="ChEBI" id="CHEBI:29035"/>
        <label>1</label>
    </ligand>
</feature>
<feature type="binding site" evidence="1">
    <location>
        <position position="439"/>
    </location>
    <ligand>
        <name>Mn(2+)</name>
        <dbReference type="ChEBI" id="CHEBI:29035"/>
        <label>2</label>
    </ligand>
</feature>
<feature type="binding site" evidence="1">
    <location>
        <position position="440"/>
    </location>
    <ligand>
        <name>Mn(2+)</name>
        <dbReference type="ChEBI" id="CHEBI:29035"/>
        <label>2</label>
    </ligand>
</feature>
<feature type="binding site" evidence="1">
    <location>
        <position position="457"/>
    </location>
    <ligand>
        <name>Mn(2+)</name>
        <dbReference type="ChEBI" id="CHEBI:29035"/>
        <label>1</label>
    </ligand>
</feature>
<evidence type="ECO:0000255" key="1">
    <source>
        <dbReference type="HAMAP-Rule" id="MF_01038"/>
    </source>
</evidence>
<sequence length="510" mass="57173">MKKTVILSVIDGLGLREEKQGNAFKLAKTPNFDKLFNEYPNSVIQASGDYVGLPDDQMGNSEVGHLNIGAGQIVYTGLSLINKDIKDNKFKQNAKFIAAFNAVKKNNETNTLHLMGLLSDGGVHSHEEHLFKLIEAAHENGLKNVSVHVFGDGRDVAPRSILTSIKKLEAITKKYNYAIGSIMGRFYAMDRDQIFTRNEQALEVMMGKTTNYFTNASEYIKAQYQKDISDEFFIPAINKDYLAKKLNLKDNDAVIFYNFRPDRARQLSHLLIQSNLYNYQSKNQVKLSNFTSMMKYEGLDTNIAYEEMKITNPLGNILAKNGLSQLRIAETQKYAHVTFFFDGGNDVLYENEERILIDSVKADSFADYPEMSAAGITDTLIANLGKYDVIILNYANPDMVGHTGNLKATIKALEFLDFQYGKILKAIEKTNHTLFITADHGNAEITEDENGNPATKHTTSPVMLIVTDKNLKLNSGTLANIAPTILDYLKIPKPKNMLDSLIMNNKRTSK</sequence>
<organism>
    <name type="scientific">Mycoplasma mobile (strain ATCC 43663 / 163K / NCTC 11711)</name>
    <name type="common">Mesomycoplasma mobile</name>
    <dbReference type="NCBI Taxonomy" id="267748"/>
    <lineage>
        <taxon>Bacteria</taxon>
        <taxon>Bacillati</taxon>
        <taxon>Mycoplasmatota</taxon>
        <taxon>Mycoplasmoidales</taxon>
        <taxon>Metamycoplasmataceae</taxon>
        <taxon>Mesomycoplasma</taxon>
    </lineage>
</organism>